<evidence type="ECO:0000255" key="1">
    <source>
        <dbReference type="HAMAP-Rule" id="MF_00285"/>
    </source>
</evidence>
<gene>
    <name evidence="1" type="primary">kdpB</name>
    <name type="ordered locus">USA300HOU_2071</name>
</gene>
<proteinExistence type="inferred from homology"/>
<organism>
    <name type="scientific">Staphylococcus aureus (strain USA300 / TCH1516)</name>
    <dbReference type="NCBI Taxonomy" id="451516"/>
    <lineage>
        <taxon>Bacteria</taxon>
        <taxon>Bacillati</taxon>
        <taxon>Bacillota</taxon>
        <taxon>Bacilli</taxon>
        <taxon>Bacillales</taxon>
        <taxon>Staphylococcaceae</taxon>
        <taxon>Staphylococcus</taxon>
    </lineage>
</organism>
<accession>A8Z4X9</accession>
<comment type="function">
    <text evidence="1">Part of the high-affinity ATP-driven potassium transport (or Kdp) system, which catalyzes the hydrolysis of ATP coupled with the electrogenic transport of potassium into the cytoplasm. This subunit is responsible for energy coupling to the transport system and for the release of the potassium ions to the cytoplasm.</text>
</comment>
<comment type="catalytic activity">
    <reaction evidence="1">
        <text>K(+)(out) + ATP + H2O = K(+)(in) + ADP + phosphate + H(+)</text>
        <dbReference type="Rhea" id="RHEA:16777"/>
        <dbReference type="ChEBI" id="CHEBI:15377"/>
        <dbReference type="ChEBI" id="CHEBI:15378"/>
        <dbReference type="ChEBI" id="CHEBI:29103"/>
        <dbReference type="ChEBI" id="CHEBI:30616"/>
        <dbReference type="ChEBI" id="CHEBI:43474"/>
        <dbReference type="ChEBI" id="CHEBI:456216"/>
        <dbReference type="EC" id="7.2.2.6"/>
    </reaction>
    <physiologicalReaction direction="left-to-right" evidence="1">
        <dbReference type="Rhea" id="RHEA:16778"/>
    </physiologicalReaction>
</comment>
<comment type="subunit">
    <text evidence="1">The system is composed of three essential subunits: KdpA, KdpB and KdpC.</text>
</comment>
<comment type="subcellular location">
    <subcellularLocation>
        <location evidence="1">Cell membrane</location>
        <topology evidence="1">Multi-pass membrane protein</topology>
    </subcellularLocation>
</comment>
<comment type="similarity">
    <text evidence="1">Belongs to the cation transport ATPase (P-type) (TC 3.A.3) family. Type IA subfamily.</text>
</comment>
<reference key="1">
    <citation type="journal article" date="2007" name="BMC Microbiol.">
        <title>Subtle genetic changes enhance virulence of methicillin resistant and sensitive Staphylococcus aureus.</title>
        <authorList>
            <person name="Highlander S.K."/>
            <person name="Hulten K.G."/>
            <person name="Qin X."/>
            <person name="Jiang H."/>
            <person name="Yerrapragada S."/>
            <person name="Mason E.O. Jr."/>
            <person name="Shang Y."/>
            <person name="Williams T.M."/>
            <person name="Fortunov R.M."/>
            <person name="Liu Y."/>
            <person name="Igboeli O."/>
            <person name="Petrosino J."/>
            <person name="Tirumalai M."/>
            <person name="Uzman A."/>
            <person name="Fox G.E."/>
            <person name="Cardenas A.M."/>
            <person name="Muzny D.M."/>
            <person name="Hemphill L."/>
            <person name="Ding Y."/>
            <person name="Dugan S."/>
            <person name="Blyth P.R."/>
            <person name="Buhay C.J."/>
            <person name="Dinh H.H."/>
            <person name="Hawes A.C."/>
            <person name="Holder M."/>
            <person name="Kovar C.L."/>
            <person name="Lee S.L."/>
            <person name="Liu W."/>
            <person name="Nazareth L.V."/>
            <person name="Wang Q."/>
            <person name="Zhou J."/>
            <person name="Kaplan S.L."/>
            <person name="Weinstock G.M."/>
        </authorList>
    </citation>
    <scope>NUCLEOTIDE SEQUENCE [LARGE SCALE GENOMIC DNA]</scope>
    <source>
        <strain>USA300 / TCH1516</strain>
    </source>
</reference>
<sequence length="675" mass="73153">MHHVNKYFNQTMVIEALKMSFYKLNLKQLIKNPIMFVVEVGMILTLILICFPDIFGTSYLSRGYLITIFIILLITILFANFSEAFAEGRGKAQADSLRQAQSNLTARLIEENGAYRIVNATELKAGQNIRVENGETIPADGVVINGLATVDESAITGESAPVIKESGGDFDGVIGGTLVTSDWLEIRVESEAGTSFLDKMIALVEGAERNKTPNEIALFTLLTTLTIIFLVVIVTLYPIASYLHLILPIAMLIALTVCLIPTTIGGLLSAIGIAGMDRVTQFNVLAKSGRAVEVCGDVDVMILDKTGTITYGNRIASEFLPVNQQMLEKLIVAAYMSSIYDDTPEGKSIVRLAKQMYINELPKDIDGTYKPFTAETRMSGIITNEISVFKGAPNSMINLVKQQQGNIPLNIESLCMDVSSKGGTPLIVIENNVMLGVIYLKDVIKDGLVERFTELRKMGIETVMCTGDNALTAATIAKEAGVDRFVAECKPEDKIKVIKDEQAKGHIVAMTGDGTNDAPALAQANIGLAMNSGTISAKEAANLIDLDSNPTKLIEVVKIGKQLLMTRGALTTFSLANDVAKYFAILPALMMSTIPEMTSLNIMHLSSPKSAIISALIFNALIIVALIPIAMKGVKVKGYSIDRIFINNMLIYGLGGLIVPFLGIKLIDMIVQFFV</sequence>
<keyword id="KW-0067">ATP-binding</keyword>
<keyword id="KW-1003">Cell membrane</keyword>
<keyword id="KW-0406">Ion transport</keyword>
<keyword id="KW-0460">Magnesium</keyword>
<keyword id="KW-0472">Membrane</keyword>
<keyword id="KW-0479">Metal-binding</keyword>
<keyword id="KW-0547">Nucleotide-binding</keyword>
<keyword id="KW-0597">Phosphoprotein</keyword>
<keyword id="KW-0630">Potassium</keyword>
<keyword id="KW-0633">Potassium transport</keyword>
<keyword id="KW-1278">Translocase</keyword>
<keyword id="KW-0812">Transmembrane</keyword>
<keyword id="KW-1133">Transmembrane helix</keyword>
<keyword id="KW-0813">Transport</keyword>
<protein>
    <recommendedName>
        <fullName evidence="1">Potassium-transporting ATPase ATP-binding subunit</fullName>
        <ecNumber evidence="1">7.2.2.6</ecNumber>
    </recommendedName>
    <alternativeName>
        <fullName evidence="1">ATP phosphohydrolase [potassium-transporting] B chain</fullName>
    </alternativeName>
    <alternativeName>
        <fullName evidence="1">Potassium-binding and translocating subunit B</fullName>
    </alternativeName>
    <alternativeName>
        <fullName evidence="1">Potassium-translocating ATPase B chain</fullName>
    </alternativeName>
</protein>
<feature type="chain" id="PRO_1000078865" description="Potassium-transporting ATPase ATP-binding subunit">
    <location>
        <begin position="1"/>
        <end position="675"/>
    </location>
</feature>
<feature type="transmembrane region" description="Helical" evidence="1">
    <location>
        <begin position="34"/>
        <end position="54"/>
    </location>
</feature>
<feature type="transmembrane region" description="Helical" evidence="1">
    <location>
        <begin position="65"/>
        <end position="85"/>
    </location>
</feature>
<feature type="transmembrane region" description="Helical" evidence="1">
    <location>
        <begin position="216"/>
        <end position="236"/>
    </location>
</feature>
<feature type="transmembrane region" description="Helical" evidence="1">
    <location>
        <begin position="245"/>
        <end position="265"/>
    </location>
</feature>
<feature type="transmembrane region" description="Helical" evidence="1">
    <location>
        <begin position="569"/>
        <end position="591"/>
    </location>
</feature>
<feature type="transmembrane region" description="Helical" evidence="1">
    <location>
        <begin position="611"/>
        <end position="631"/>
    </location>
</feature>
<feature type="transmembrane region" description="Helical" evidence="1">
    <location>
        <begin position="644"/>
        <end position="664"/>
    </location>
</feature>
<feature type="active site" description="4-aspartylphosphate intermediate" evidence="1">
    <location>
        <position position="304"/>
    </location>
</feature>
<feature type="binding site" evidence="1">
    <location>
        <position position="341"/>
    </location>
    <ligand>
        <name>ATP</name>
        <dbReference type="ChEBI" id="CHEBI:30616"/>
    </ligand>
</feature>
<feature type="binding site" evidence="1">
    <location>
        <position position="345"/>
    </location>
    <ligand>
        <name>ATP</name>
        <dbReference type="ChEBI" id="CHEBI:30616"/>
    </ligand>
</feature>
<feature type="binding site" evidence="1">
    <location>
        <begin position="372"/>
        <end position="379"/>
    </location>
    <ligand>
        <name>ATP</name>
        <dbReference type="ChEBI" id="CHEBI:30616"/>
    </ligand>
</feature>
<feature type="binding site" evidence="1">
    <location>
        <position position="390"/>
    </location>
    <ligand>
        <name>ATP</name>
        <dbReference type="ChEBI" id="CHEBI:30616"/>
    </ligand>
</feature>
<feature type="binding site" evidence="1">
    <location>
        <position position="513"/>
    </location>
    <ligand>
        <name>Mg(2+)</name>
        <dbReference type="ChEBI" id="CHEBI:18420"/>
    </ligand>
</feature>
<feature type="binding site" evidence="1">
    <location>
        <position position="517"/>
    </location>
    <ligand>
        <name>Mg(2+)</name>
        <dbReference type="ChEBI" id="CHEBI:18420"/>
    </ligand>
</feature>
<name>KDPB_STAAT</name>
<dbReference type="EC" id="7.2.2.6" evidence="1"/>
<dbReference type="EMBL" id="CP000730">
    <property type="protein sequence ID" value="ABX30068.1"/>
    <property type="molecule type" value="Genomic_DNA"/>
</dbReference>
<dbReference type="RefSeq" id="WP_000546584.1">
    <property type="nucleotide sequence ID" value="NC_010079.1"/>
</dbReference>
<dbReference type="SMR" id="A8Z4X9"/>
<dbReference type="KEGG" id="sax:USA300HOU_2071"/>
<dbReference type="HOGENOM" id="CLU_025728_2_0_9"/>
<dbReference type="GO" id="GO:0005886">
    <property type="term" value="C:plasma membrane"/>
    <property type="evidence" value="ECO:0007669"/>
    <property type="project" value="UniProtKB-SubCell"/>
</dbReference>
<dbReference type="GO" id="GO:0005524">
    <property type="term" value="F:ATP binding"/>
    <property type="evidence" value="ECO:0007669"/>
    <property type="project" value="UniProtKB-UniRule"/>
</dbReference>
<dbReference type="GO" id="GO:0016887">
    <property type="term" value="F:ATP hydrolysis activity"/>
    <property type="evidence" value="ECO:0007669"/>
    <property type="project" value="InterPro"/>
</dbReference>
<dbReference type="GO" id="GO:0000287">
    <property type="term" value="F:magnesium ion binding"/>
    <property type="evidence" value="ECO:0007669"/>
    <property type="project" value="UniProtKB-UniRule"/>
</dbReference>
<dbReference type="GO" id="GO:0008556">
    <property type="term" value="F:P-type potassium transmembrane transporter activity"/>
    <property type="evidence" value="ECO:0007669"/>
    <property type="project" value="UniProtKB-UniRule"/>
</dbReference>
<dbReference type="FunFam" id="2.70.150.10:FF:000010">
    <property type="entry name" value="Potassium-transporting ATPase ATP-binding subunit"/>
    <property type="match status" value="1"/>
</dbReference>
<dbReference type="FunFam" id="3.40.1110.10:FF:000007">
    <property type="entry name" value="Potassium-transporting ATPase ATP-binding subunit"/>
    <property type="match status" value="1"/>
</dbReference>
<dbReference type="Gene3D" id="3.40.1110.10">
    <property type="entry name" value="Calcium-transporting ATPase, cytoplasmic domain N"/>
    <property type="match status" value="1"/>
</dbReference>
<dbReference type="Gene3D" id="2.70.150.10">
    <property type="entry name" value="Calcium-transporting ATPase, cytoplasmic transduction domain A"/>
    <property type="match status" value="1"/>
</dbReference>
<dbReference type="Gene3D" id="3.40.50.1000">
    <property type="entry name" value="HAD superfamily/HAD-like"/>
    <property type="match status" value="1"/>
</dbReference>
<dbReference type="HAMAP" id="MF_00285">
    <property type="entry name" value="KdpB"/>
    <property type="match status" value="1"/>
</dbReference>
<dbReference type="InterPro" id="IPR023299">
    <property type="entry name" value="ATPase_P-typ_cyto_dom_N"/>
</dbReference>
<dbReference type="InterPro" id="IPR018303">
    <property type="entry name" value="ATPase_P-typ_P_site"/>
</dbReference>
<dbReference type="InterPro" id="IPR023298">
    <property type="entry name" value="ATPase_P-typ_TM_dom_sf"/>
</dbReference>
<dbReference type="InterPro" id="IPR008250">
    <property type="entry name" value="ATPase_P-typ_transduc_dom_A_sf"/>
</dbReference>
<dbReference type="InterPro" id="IPR036412">
    <property type="entry name" value="HAD-like_sf"/>
</dbReference>
<dbReference type="InterPro" id="IPR023214">
    <property type="entry name" value="HAD_sf"/>
</dbReference>
<dbReference type="InterPro" id="IPR006391">
    <property type="entry name" value="P-type_ATPase_bsu_IA"/>
</dbReference>
<dbReference type="InterPro" id="IPR001757">
    <property type="entry name" value="P_typ_ATPase"/>
</dbReference>
<dbReference type="InterPro" id="IPR044492">
    <property type="entry name" value="P_typ_ATPase_HD_dom"/>
</dbReference>
<dbReference type="NCBIfam" id="TIGR01494">
    <property type="entry name" value="ATPase_P-type"/>
    <property type="match status" value="2"/>
</dbReference>
<dbReference type="NCBIfam" id="TIGR01497">
    <property type="entry name" value="kdpB"/>
    <property type="match status" value="1"/>
</dbReference>
<dbReference type="PANTHER" id="PTHR43743">
    <property type="entry name" value="POTASSIUM-TRANSPORTING ATPASE ATP-BINDING SUBUNIT"/>
    <property type="match status" value="1"/>
</dbReference>
<dbReference type="PANTHER" id="PTHR43743:SF1">
    <property type="entry name" value="POTASSIUM-TRANSPORTING ATPASE ATP-BINDING SUBUNIT"/>
    <property type="match status" value="1"/>
</dbReference>
<dbReference type="Pfam" id="PF00122">
    <property type="entry name" value="E1-E2_ATPase"/>
    <property type="match status" value="1"/>
</dbReference>
<dbReference type="Pfam" id="PF00702">
    <property type="entry name" value="Hydrolase"/>
    <property type="match status" value="1"/>
</dbReference>
<dbReference type="PRINTS" id="PR00119">
    <property type="entry name" value="CATATPASE"/>
</dbReference>
<dbReference type="SFLD" id="SFLDG00002">
    <property type="entry name" value="C1.7:_P-type_atpase_like"/>
    <property type="match status" value="1"/>
</dbReference>
<dbReference type="SFLD" id="SFLDF00027">
    <property type="entry name" value="p-type_atpase"/>
    <property type="match status" value="1"/>
</dbReference>
<dbReference type="SUPFAM" id="SSF81653">
    <property type="entry name" value="Calcium ATPase, transduction domain A"/>
    <property type="match status" value="1"/>
</dbReference>
<dbReference type="SUPFAM" id="SSF81665">
    <property type="entry name" value="Calcium ATPase, transmembrane domain M"/>
    <property type="match status" value="1"/>
</dbReference>
<dbReference type="SUPFAM" id="SSF56784">
    <property type="entry name" value="HAD-like"/>
    <property type="match status" value="1"/>
</dbReference>
<dbReference type="PROSITE" id="PS00154">
    <property type="entry name" value="ATPASE_E1_E2"/>
    <property type="match status" value="1"/>
</dbReference>